<protein>
    <recommendedName>
        <fullName evidence="2">Small ribosomal subunit protein uS9c</fullName>
    </recommendedName>
    <alternativeName>
        <fullName>30S ribosomal protein S9, chloroplastic</fullName>
    </alternativeName>
</protein>
<accession>O20029</accession>
<accession>B7U1H9</accession>
<organism>
    <name type="scientific">Chlamydomonas reinhardtii</name>
    <name type="common">Chlamydomonas smithii</name>
    <dbReference type="NCBI Taxonomy" id="3055"/>
    <lineage>
        <taxon>Eukaryota</taxon>
        <taxon>Viridiplantae</taxon>
        <taxon>Chlorophyta</taxon>
        <taxon>core chlorophytes</taxon>
        <taxon>Chlorophyceae</taxon>
        <taxon>CS clade</taxon>
        <taxon>Chlamydomonadales</taxon>
        <taxon>Chlamydomonadaceae</taxon>
        <taxon>Chlamydomonas</taxon>
    </lineage>
</organism>
<dbReference type="EMBL" id="Y13655">
    <property type="protein sequence ID" value="CAA74006.1"/>
    <property type="molecule type" value="Genomic_DNA"/>
</dbReference>
<dbReference type="EMBL" id="FJ423446">
    <property type="protein sequence ID" value="ACJ50126.1"/>
    <property type="molecule type" value="Genomic_DNA"/>
</dbReference>
<dbReference type="EMBL" id="BK000554">
    <property type="protein sequence ID" value="DAA00940.1"/>
    <property type="molecule type" value="Genomic_DNA"/>
</dbReference>
<dbReference type="PIR" id="T07994">
    <property type="entry name" value="T07994"/>
</dbReference>
<dbReference type="RefSeq" id="NP_958395.1">
    <property type="nucleotide sequence ID" value="NC_005353.1"/>
</dbReference>
<dbReference type="SMR" id="O20029"/>
<dbReference type="FunCoup" id="O20029">
    <property type="interactions" value="628"/>
</dbReference>
<dbReference type="STRING" id="3055.O20029"/>
<dbReference type="PaxDb" id="3055-DAA00940"/>
<dbReference type="GeneID" id="2717010"/>
<dbReference type="KEGG" id="cre:ChreCp039"/>
<dbReference type="eggNOG" id="KOG1697">
    <property type="taxonomic scope" value="Eukaryota"/>
</dbReference>
<dbReference type="HOGENOM" id="CLU_1423394_0_0_1"/>
<dbReference type="InParanoid" id="O20029"/>
<dbReference type="Proteomes" id="UP000006906">
    <property type="component" value="Chloroplast"/>
</dbReference>
<dbReference type="GO" id="GO:0009507">
    <property type="term" value="C:chloroplast"/>
    <property type="evidence" value="ECO:0007669"/>
    <property type="project" value="UniProtKB-SubCell"/>
</dbReference>
<dbReference type="GO" id="GO:0015935">
    <property type="term" value="C:small ribosomal subunit"/>
    <property type="evidence" value="ECO:0000318"/>
    <property type="project" value="GO_Central"/>
</dbReference>
<dbReference type="GO" id="GO:0003723">
    <property type="term" value="F:RNA binding"/>
    <property type="evidence" value="ECO:0000318"/>
    <property type="project" value="GO_Central"/>
</dbReference>
<dbReference type="GO" id="GO:0003735">
    <property type="term" value="F:structural constituent of ribosome"/>
    <property type="evidence" value="ECO:0000318"/>
    <property type="project" value="GO_Central"/>
</dbReference>
<dbReference type="GO" id="GO:0006412">
    <property type="term" value="P:translation"/>
    <property type="evidence" value="ECO:0007669"/>
    <property type="project" value="InterPro"/>
</dbReference>
<dbReference type="Gene3D" id="3.30.230.10">
    <property type="match status" value="1"/>
</dbReference>
<dbReference type="InterPro" id="IPR020568">
    <property type="entry name" value="Ribosomal_Su5_D2-typ_SF"/>
</dbReference>
<dbReference type="InterPro" id="IPR000754">
    <property type="entry name" value="Ribosomal_uS9"/>
</dbReference>
<dbReference type="InterPro" id="IPR020574">
    <property type="entry name" value="Ribosomal_uS9_CS"/>
</dbReference>
<dbReference type="InterPro" id="IPR014721">
    <property type="entry name" value="Ribsml_uS5_D2-typ_fold_subgr"/>
</dbReference>
<dbReference type="PANTHER" id="PTHR21569">
    <property type="entry name" value="RIBOSOMAL PROTEIN S9"/>
    <property type="match status" value="1"/>
</dbReference>
<dbReference type="PANTHER" id="PTHR21569:SF1">
    <property type="entry name" value="SMALL RIBOSOMAL SUBUNIT PROTEIN US9M"/>
    <property type="match status" value="1"/>
</dbReference>
<dbReference type="Pfam" id="PF00380">
    <property type="entry name" value="Ribosomal_S9"/>
    <property type="match status" value="3"/>
</dbReference>
<dbReference type="SUPFAM" id="SSF54211">
    <property type="entry name" value="Ribosomal protein S5 domain 2-like"/>
    <property type="match status" value="2"/>
</dbReference>
<dbReference type="PROSITE" id="PS00360">
    <property type="entry name" value="RIBOSOMAL_S9"/>
    <property type="match status" value="1"/>
</dbReference>
<proteinExistence type="evidence at protein level"/>
<comment type="subcellular location">
    <subcellularLocation>
        <location>Plastid</location>
        <location>Chloroplast</location>
    </subcellularLocation>
</comment>
<comment type="similarity">
    <text evidence="2">Belongs to the universal ribosomal protein uS9 family.</text>
</comment>
<geneLocation type="chloroplast"/>
<name>RR9_CHLRE</name>
<feature type="chain" id="PRO_0000111450" description="Small ribosomal subunit protein uS9c">
    <location>
        <begin position="1"/>
        <end position="191"/>
    </location>
</feature>
<feature type="region of interest" description="Disordered" evidence="1">
    <location>
        <begin position="166"/>
        <end position="191"/>
    </location>
</feature>
<feature type="compositionally biased region" description="Basic residues" evidence="1">
    <location>
        <begin position="172"/>
        <end position="191"/>
    </location>
</feature>
<keyword id="KW-0150">Chloroplast</keyword>
<keyword id="KW-0903">Direct protein sequencing</keyword>
<keyword id="KW-0934">Plastid</keyword>
<keyword id="KW-1185">Reference proteome</keyword>
<keyword id="KW-0687">Ribonucleoprotein</keyword>
<keyword id="KW-0689">Ribosomal protein</keyword>
<sequence>MAILAKAVGRRKEAVAQVQIKEGNGLFIINNKSAQEYLHNDFYSLLAVKAPFDVLSTSKKADMVSPDLSLTNLESTFTNLMQFSGGENAVKFDTIVKVKGGGLMGQTEAIRLGISRALCLLSTNTNPSANQNNLPNIYIPEGEGEALAIPNASDIRKQLKDKGYLTQDSRVKERRKYGLKKARKASQYHKR</sequence>
<reference key="1">
    <citation type="journal article" date="1997" name="EMBO J.">
        <title>The chloroplast ycf3 and ycf4 open reading frames of Chlamydomonas reinhardtii are required for the accumulation of the photosystem I complex.</title>
        <authorList>
            <person name="Boudreau E."/>
            <person name="Takahashi Y."/>
            <person name="Lemieux C."/>
            <person name="Turmel M."/>
            <person name="Rochaix J.-D."/>
        </authorList>
    </citation>
    <scope>NUCLEOTIDE SEQUENCE [GENOMIC DNA]</scope>
</reference>
<reference key="2">
    <citation type="journal article" date="2009" name="BMC Evol. Biol.">
        <title>Nucleotide diversity of the Chlamydomonas reinhardtii plastid genome: addressing the mutational-hazard hypothesis.</title>
        <authorList>
            <person name="Smith D.R."/>
            <person name="Lee R.W."/>
        </authorList>
    </citation>
    <scope>NUCLEOTIDE SEQUENCE [LARGE SCALE GENOMIC DNA]</scope>
    <source>
        <strain>CC-503</strain>
    </source>
</reference>
<reference key="3">
    <citation type="journal article" date="2002" name="Plant Cell">
        <title>Proteomic characterization of the small subunit of Chlamydomonas reinhardtii chloroplast ribosome: identification of a novel S1 domain-containing protein and unusually large orthologs of bacterial S2, S3, and S5.</title>
        <authorList>
            <person name="Yamaguchi K."/>
            <person name="Prieto S."/>
            <person name="Beligni M.V."/>
            <person name="Haynes P.A."/>
            <person name="McDonald W.H."/>
            <person name="Yates J.R. III"/>
            <person name="Mayfield S.P."/>
        </authorList>
    </citation>
    <scope>PROTEIN SEQUENCE OF 13-21; 50-59 AND 161-172</scope>
    <source>
        <strain>Arg7/cw15</strain>
    </source>
</reference>
<reference key="4">
    <citation type="journal article" date="2002" name="Plant Cell">
        <title>The Chlamydomonas reinhardtii plastid chromosome: islands of genes in a sea of repeats.</title>
        <authorList>
            <person name="Maul J.E."/>
            <person name="Lilly J.W."/>
            <person name="Cui L."/>
            <person name="dePamphilis C.W."/>
            <person name="Miller W."/>
            <person name="Harris E.H."/>
            <person name="Stern D.B."/>
        </authorList>
    </citation>
    <scope>IDENTIFICATION</scope>
    <scope>COMPLETE PLASTID GENOME</scope>
</reference>
<gene>
    <name type="primary">rps9</name>
</gene>
<evidence type="ECO:0000256" key="1">
    <source>
        <dbReference type="SAM" id="MobiDB-lite"/>
    </source>
</evidence>
<evidence type="ECO:0000305" key="2"/>